<keyword id="KW-0040">ANK repeat</keyword>
<keyword id="KW-0677">Repeat</keyword>
<accession>Q4ULE0</accession>
<name>Y782_RICFE</name>
<organism>
    <name type="scientific">Rickettsia felis (strain ATCC VR-1525 / URRWXCal2)</name>
    <name type="common">Rickettsia azadi</name>
    <dbReference type="NCBI Taxonomy" id="315456"/>
    <lineage>
        <taxon>Bacteria</taxon>
        <taxon>Pseudomonadati</taxon>
        <taxon>Pseudomonadota</taxon>
        <taxon>Alphaproteobacteria</taxon>
        <taxon>Rickettsiales</taxon>
        <taxon>Rickettsiaceae</taxon>
        <taxon>Rickettsieae</taxon>
        <taxon>Rickettsia</taxon>
        <taxon>spotted fever group</taxon>
    </lineage>
</organism>
<reference key="1">
    <citation type="journal article" date="2005" name="PLoS Biol.">
        <title>The genome sequence of Rickettsia felis identifies the first putative conjugative plasmid in an obligate intracellular parasite.</title>
        <authorList>
            <person name="Ogata H."/>
            <person name="Renesto P."/>
            <person name="Audic S."/>
            <person name="Robert C."/>
            <person name="Blanc G."/>
            <person name="Fournier P.-E."/>
            <person name="Parinello H."/>
            <person name="Claverie J.-M."/>
            <person name="Raoult D."/>
        </authorList>
    </citation>
    <scope>NUCLEOTIDE SEQUENCE [LARGE SCALE GENOMIC DNA]</scope>
    <source>
        <strain>ATCC VR-1525 / URRWXCal2</strain>
    </source>
</reference>
<gene>
    <name type="ordered locus">RF_0782</name>
</gene>
<feature type="chain" id="PRO_0000281751" description="Putative ankyrin repeat protein RF_0782">
    <location>
        <begin position="1"/>
        <end position="181"/>
    </location>
</feature>
<feature type="repeat" description="ANK 1">
    <location>
        <begin position="24"/>
        <end position="53"/>
    </location>
</feature>
<feature type="repeat" description="ANK 2">
    <location>
        <begin position="54"/>
        <end position="83"/>
    </location>
</feature>
<protein>
    <recommendedName>
        <fullName>Putative ankyrin repeat protein RF_0782</fullName>
    </recommendedName>
</protein>
<sequence length="181" mass="20530">MLAQDNIQINIEPVTTSSSGIPIYHYSPLATAASVGSVEIVEALLSKGADINFGSTPSFITAIKNGHLKICYLLKALGANTQINLPNGEKPLELYKDYLYKFYDELYEFKQTIQDRAGAYYGYDKNKPLNIKDLEIWYTKLVIWDFKAFSRKAHTMKEIEELSEYEQNLFPEITDSVNIIG</sequence>
<proteinExistence type="predicted"/>
<dbReference type="EMBL" id="CP000053">
    <property type="protein sequence ID" value="AAY61633.1"/>
    <property type="molecule type" value="Genomic_DNA"/>
</dbReference>
<dbReference type="SMR" id="Q4ULE0"/>
<dbReference type="STRING" id="315456.RF_0782"/>
<dbReference type="KEGG" id="rfe:RF_0782"/>
<dbReference type="HOGENOM" id="CLU_1487973_0_0_5"/>
<dbReference type="Proteomes" id="UP000008548">
    <property type="component" value="Chromosome"/>
</dbReference>
<dbReference type="Gene3D" id="1.25.40.20">
    <property type="entry name" value="Ankyrin repeat-containing domain"/>
    <property type="match status" value="1"/>
</dbReference>
<dbReference type="InterPro" id="IPR002110">
    <property type="entry name" value="Ankyrin_rpt"/>
</dbReference>
<dbReference type="InterPro" id="IPR036770">
    <property type="entry name" value="Ankyrin_rpt-contain_sf"/>
</dbReference>
<dbReference type="Pfam" id="PF12796">
    <property type="entry name" value="Ank_2"/>
    <property type="match status" value="1"/>
</dbReference>
<dbReference type="SMART" id="SM00248">
    <property type="entry name" value="ANK"/>
    <property type="match status" value="2"/>
</dbReference>
<dbReference type="SUPFAM" id="SSF48403">
    <property type="entry name" value="Ankyrin repeat"/>
    <property type="match status" value="1"/>
</dbReference>
<dbReference type="PROSITE" id="PS50297">
    <property type="entry name" value="ANK_REP_REGION"/>
    <property type="match status" value="1"/>
</dbReference>
<dbReference type="PROSITE" id="PS50088">
    <property type="entry name" value="ANK_REPEAT"/>
    <property type="match status" value="1"/>
</dbReference>